<name>DXR_EXISA</name>
<gene>
    <name evidence="1" type="primary">dxr</name>
    <name type="ordered locus">EAT1b_2948</name>
</gene>
<evidence type="ECO:0000255" key="1">
    <source>
        <dbReference type="HAMAP-Rule" id="MF_00183"/>
    </source>
</evidence>
<organism>
    <name type="scientific">Exiguobacterium sp. (strain ATCC BAA-1283 / AT1b)</name>
    <dbReference type="NCBI Taxonomy" id="360911"/>
    <lineage>
        <taxon>Bacteria</taxon>
        <taxon>Bacillati</taxon>
        <taxon>Bacillota</taxon>
        <taxon>Bacilli</taxon>
        <taxon>Bacillales</taxon>
        <taxon>Bacillales Family XII. Incertae Sedis</taxon>
        <taxon>Exiguobacterium</taxon>
    </lineage>
</organism>
<accession>C4L656</accession>
<protein>
    <recommendedName>
        <fullName evidence="1">1-deoxy-D-xylulose 5-phosphate reductoisomerase</fullName>
        <shortName evidence="1">DXP reductoisomerase</shortName>
        <ecNumber evidence="1">1.1.1.267</ecNumber>
    </recommendedName>
    <alternativeName>
        <fullName evidence="1">1-deoxyxylulose-5-phosphate reductoisomerase</fullName>
    </alternativeName>
    <alternativeName>
        <fullName evidence="1">2-C-methyl-D-erythritol 4-phosphate synthase</fullName>
    </alternativeName>
</protein>
<dbReference type="EC" id="1.1.1.267" evidence="1"/>
<dbReference type="EMBL" id="CP001615">
    <property type="protein sequence ID" value="ACQ71862.1"/>
    <property type="molecule type" value="Genomic_DNA"/>
</dbReference>
<dbReference type="RefSeq" id="WP_015881421.1">
    <property type="nucleotide sequence ID" value="NC_012673.1"/>
</dbReference>
<dbReference type="SMR" id="C4L656"/>
<dbReference type="STRING" id="360911.EAT1b_2948"/>
<dbReference type="KEGG" id="eat:EAT1b_2948"/>
<dbReference type="eggNOG" id="COG0743">
    <property type="taxonomic scope" value="Bacteria"/>
</dbReference>
<dbReference type="HOGENOM" id="CLU_035714_4_0_9"/>
<dbReference type="OrthoDB" id="9806546at2"/>
<dbReference type="UniPathway" id="UPA00056">
    <property type="reaction ID" value="UER00092"/>
</dbReference>
<dbReference type="Proteomes" id="UP000000716">
    <property type="component" value="Chromosome"/>
</dbReference>
<dbReference type="GO" id="GO:0030604">
    <property type="term" value="F:1-deoxy-D-xylulose-5-phosphate reductoisomerase activity"/>
    <property type="evidence" value="ECO:0007669"/>
    <property type="project" value="UniProtKB-UniRule"/>
</dbReference>
<dbReference type="GO" id="GO:0030145">
    <property type="term" value="F:manganese ion binding"/>
    <property type="evidence" value="ECO:0007669"/>
    <property type="project" value="TreeGrafter"/>
</dbReference>
<dbReference type="GO" id="GO:0070402">
    <property type="term" value="F:NADPH binding"/>
    <property type="evidence" value="ECO:0007669"/>
    <property type="project" value="InterPro"/>
</dbReference>
<dbReference type="GO" id="GO:0051484">
    <property type="term" value="P:isopentenyl diphosphate biosynthetic process, methylerythritol 4-phosphate pathway involved in terpenoid biosynthetic process"/>
    <property type="evidence" value="ECO:0007669"/>
    <property type="project" value="TreeGrafter"/>
</dbReference>
<dbReference type="FunFam" id="3.40.50.720:FF:000045">
    <property type="entry name" value="1-deoxy-D-xylulose 5-phosphate reductoisomerase"/>
    <property type="match status" value="1"/>
</dbReference>
<dbReference type="Gene3D" id="1.10.1740.10">
    <property type="match status" value="1"/>
</dbReference>
<dbReference type="Gene3D" id="3.40.50.720">
    <property type="entry name" value="NAD(P)-binding Rossmann-like Domain"/>
    <property type="match status" value="1"/>
</dbReference>
<dbReference type="HAMAP" id="MF_00183">
    <property type="entry name" value="DXP_reductoisom"/>
    <property type="match status" value="1"/>
</dbReference>
<dbReference type="InterPro" id="IPR003821">
    <property type="entry name" value="DXP_reductoisomerase"/>
</dbReference>
<dbReference type="InterPro" id="IPR013644">
    <property type="entry name" value="DXP_reductoisomerase_C"/>
</dbReference>
<dbReference type="InterPro" id="IPR013512">
    <property type="entry name" value="DXP_reductoisomerase_N"/>
</dbReference>
<dbReference type="InterPro" id="IPR026877">
    <property type="entry name" value="DXPR_C"/>
</dbReference>
<dbReference type="InterPro" id="IPR036169">
    <property type="entry name" value="DXPR_C_sf"/>
</dbReference>
<dbReference type="InterPro" id="IPR036291">
    <property type="entry name" value="NAD(P)-bd_dom_sf"/>
</dbReference>
<dbReference type="NCBIfam" id="TIGR00243">
    <property type="entry name" value="Dxr"/>
    <property type="match status" value="1"/>
</dbReference>
<dbReference type="NCBIfam" id="NF009114">
    <property type="entry name" value="PRK12464.1"/>
    <property type="match status" value="1"/>
</dbReference>
<dbReference type="PANTHER" id="PTHR30525">
    <property type="entry name" value="1-DEOXY-D-XYLULOSE 5-PHOSPHATE REDUCTOISOMERASE"/>
    <property type="match status" value="1"/>
</dbReference>
<dbReference type="PANTHER" id="PTHR30525:SF0">
    <property type="entry name" value="1-DEOXY-D-XYLULOSE 5-PHOSPHATE REDUCTOISOMERASE, CHLOROPLASTIC"/>
    <property type="match status" value="1"/>
</dbReference>
<dbReference type="Pfam" id="PF08436">
    <property type="entry name" value="DXP_redisom_C"/>
    <property type="match status" value="1"/>
</dbReference>
<dbReference type="Pfam" id="PF02670">
    <property type="entry name" value="DXP_reductoisom"/>
    <property type="match status" value="1"/>
</dbReference>
<dbReference type="Pfam" id="PF13288">
    <property type="entry name" value="DXPR_C"/>
    <property type="match status" value="1"/>
</dbReference>
<dbReference type="PIRSF" id="PIRSF006205">
    <property type="entry name" value="Dxp_reductismrs"/>
    <property type="match status" value="1"/>
</dbReference>
<dbReference type="SUPFAM" id="SSF69055">
    <property type="entry name" value="1-deoxy-D-xylulose-5-phosphate reductoisomerase, C-terminal domain"/>
    <property type="match status" value="1"/>
</dbReference>
<dbReference type="SUPFAM" id="SSF55347">
    <property type="entry name" value="Glyceraldehyde-3-phosphate dehydrogenase-like, C-terminal domain"/>
    <property type="match status" value="1"/>
</dbReference>
<dbReference type="SUPFAM" id="SSF51735">
    <property type="entry name" value="NAD(P)-binding Rossmann-fold domains"/>
    <property type="match status" value="1"/>
</dbReference>
<proteinExistence type="inferred from homology"/>
<keyword id="KW-0414">Isoprene biosynthesis</keyword>
<keyword id="KW-0464">Manganese</keyword>
<keyword id="KW-0479">Metal-binding</keyword>
<keyword id="KW-0521">NADP</keyword>
<keyword id="KW-0560">Oxidoreductase</keyword>
<reference key="1">
    <citation type="journal article" date="2011" name="J. Bacteriol.">
        <title>Complete genome sequence of the Thermophilic Bacterium Exiguobacterium sp. AT1b.</title>
        <authorList>
            <person name="Vishnivetskaya T.A."/>
            <person name="Lucas S."/>
            <person name="Copeland A."/>
            <person name="Lapidus A."/>
            <person name="Glavina del Rio T."/>
            <person name="Dalin E."/>
            <person name="Tice H."/>
            <person name="Bruce D.C."/>
            <person name="Goodwin L.A."/>
            <person name="Pitluck S."/>
            <person name="Saunders E."/>
            <person name="Brettin T."/>
            <person name="Detter C."/>
            <person name="Han C."/>
            <person name="Larimer F."/>
            <person name="Land M.L."/>
            <person name="Hauser L.J."/>
            <person name="Kyrpides N.C."/>
            <person name="Ovchinnikova G."/>
            <person name="Kathariou S."/>
            <person name="Ramaley R.F."/>
            <person name="Rodrigues D.F."/>
            <person name="Hendrix C."/>
            <person name="Richardson P."/>
            <person name="Tiedje J.M."/>
        </authorList>
    </citation>
    <scope>NUCLEOTIDE SEQUENCE [LARGE SCALE GENOMIC DNA]</scope>
    <source>
        <strain>ATCC BAA-1283 / AT1b</strain>
    </source>
</reference>
<feature type="chain" id="PRO_1000203887" description="1-deoxy-D-xylulose 5-phosphate reductoisomerase">
    <location>
        <begin position="1"/>
        <end position="385"/>
    </location>
</feature>
<feature type="binding site" evidence="1">
    <location>
        <position position="10"/>
    </location>
    <ligand>
        <name>NADPH</name>
        <dbReference type="ChEBI" id="CHEBI:57783"/>
    </ligand>
</feature>
<feature type="binding site" evidence="1">
    <location>
        <position position="11"/>
    </location>
    <ligand>
        <name>NADPH</name>
        <dbReference type="ChEBI" id="CHEBI:57783"/>
    </ligand>
</feature>
<feature type="binding site" evidence="1">
    <location>
        <position position="12"/>
    </location>
    <ligand>
        <name>NADPH</name>
        <dbReference type="ChEBI" id="CHEBI:57783"/>
    </ligand>
</feature>
<feature type="binding site" evidence="1">
    <location>
        <position position="13"/>
    </location>
    <ligand>
        <name>NADPH</name>
        <dbReference type="ChEBI" id="CHEBI:57783"/>
    </ligand>
</feature>
<feature type="binding site" evidence="1">
    <location>
        <position position="36"/>
    </location>
    <ligand>
        <name>NADPH</name>
        <dbReference type="ChEBI" id="CHEBI:57783"/>
    </ligand>
</feature>
<feature type="binding site" evidence="1">
    <location>
        <position position="38"/>
    </location>
    <ligand>
        <name>NADPH</name>
        <dbReference type="ChEBI" id="CHEBI:57783"/>
    </ligand>
</feature>
<feature type="binding site" evidence="1">
    <location>
        <position position="121"/>
    </location>
    <ligand>
        <name>NADPH</name>
        <dbReference type="ChEBI" id="CHEBI:57783"/>
    </ligand>
</feature>
<feature type="binding site" evidence="1">
    <location>
        <position position="122"/>
    </location>
    <ligand>
        <name>1-deoxy-D-xylulose 5-phosphate</name>
        <dbReference type="ChEBI" id="CHEBI:57792"/>
    </ligand>
</feature>
<feature type="binding site" evidence="1">
    <location>
        <position position="123"/>
    </location>
    <ligand>
        <name>NADPH</name>
        <dbReference type="ChEBI" id="CHEBI:57783"/>
    </ligand>
</feature>
<feature type="binding site" evidence="1">
    <location>
        <position position="147"/>
    </location>
    <ligand>
        <name>Mn(2+)</name>
        <dbReference type="ChEBI" id="CHEBI:29035"/>
    </ligand>
</feature>
<feature type="binding site" evidence="1">
    <location>
        <position position="148"/>
    </location>
    <ligand>
        <name>1-deoxy-D-xylulose 5-phosphate</name>
        <dbReference type="ChEBI" id="CHEBI:57792"/>
    </ligand>
</feature>
<feature type="binding site" evidence="1">
    <location>
        <position position="149"/>
    </location>
    <ligand>
        <name>1-deoxy-D-xylulose 5-phosphate</name>
        <dbReference type="ChEBI" id="CHEBI:57792"/>
    </ligand>
</feature>
<feature type="binding site" evidence="1">
    <location>
        <position position="149"/>
    </location>
    <ligand>
        <name>Mn(2+)</name>
        <dbReference type="ChEBI" id="CHEBI:29035"/>
    </ligand>
</feature>
<feature type="binding site" evidence="1">
    <location>
        <position position="173"/>
    </location>
    <ligand>
        <name>1-deoxy-D-xylulose 5-phosphate</name>
        <dbReference type="ChEBI" id="CHEBI:57792"/>
    </ligand>
</feature>
<feature type="binding site" evidence="1">
    <location>
        <position position="196"/>
    </location>
    <ligand>
        <name>1-deoxy-D-xylulose 5-phosphate</name>
        <dbReference type="ChEBI" id="CHEBI:57792"/>
    </ligand>
</feature>
<feature type="binding site" evidence="1">
    <location>
        <position position="202"/>
    </location>
    <ligand>
        <name>NADPH</name>
        <dbReference type="ChEBI" id="CHEBI:57783"/>
    </ligand>
</feature>
<feature type="binding site" evidence="1">
    <location>
        <position position="209"/>
    </location>
    <ligand>
        <name>1-deoxy-D-xylulose 5-phosphate</name>
        <dbReference type="ChEBI" id="CHEBI:57792"/>
    </ligand>
</feature>
<feature type="binding site" evidence="1">
    <location>
        <position position="214"/>
    </location>
    <ligand>
        <name>1-deoxy-D-xylulose 5-phosphate</name>
        <dbReference type="ChEBI" id="CHEBI:57792"/>
    </ligand>
</feature>
<feature type="binding site" evidence="1">
    <location>
        <position position="215"/>
    </location>
    <ligand>
        <name>1-deoxy-D-xylulose 5-phosphate</name>
        <dbReference type="ChEBI" id="CHEBI:57792"/>
    </ligand>
</feature>
<feature type="binding site" evidence="1">
    <location>
        <position position="218"/>
    </location>
    <ligand>
        <name>1-deoxy-D-xylulose 5-phosphate</name>
        <dbReference type="ChEBI" id="CHEBI:57792"/>
    </ligand>
</feature>
<feature type="binding site" evidence="1">
    <location>
        <position position="218"/>
    </location>
    <ligand>
        <name>Mn(2+)</name>
        <dbReference type="ChEBI" id="CHEBI:29035"/>
    </ligand>
</feature>
<comment type="function">
    <text evidence="1">Catalyzes the NADPH-dependent rearrangement and reduction of 1-deoxy-D-xylulose-5-phosphate (DXP) to 2-C-methyl-D-erythritol 4-phosphate (MEP).</text>
</comment>
<comment type="catalytic activity">
    <reaction evidence="1">
        <text>2-C-methyl-D-erythritol 4-phosphate + NADP(+) = 1-deoxy-D-xylulose 5-phosphate + NADPH + H(+)</text>
        <dbReference type="Rhea" id="RHEA:13717"/>
        <dbReference type="ChEBI" id="CHEBI:15378"/>
        <dbReference type="ChEBI" id="CHEBI:57783"/>
        <dbReference type="ChEBI" id="CHEBI:57792"/>
        <dbReference type="ChEBI" id="CHEBI:58262"/>
        <dbReference type="ChEBI" id="CHEBI:58349"/>
        <dbReference type="EC" id="1.1.1.267"/>
    </reaction>
    <physiologicalReaction direction="right-to-left" evidence="1">
        <dbReference type="Rhea" id="RHEA:13719"/>
    </physiologicalReaction>
</comment>
<comment type="cofactor">
    <cofactor evidence="1">
        <name>Mg(2+)</name>
        <dbReference type="ChEBI" id="CHEBI:18420"/>
    </cofactor>
    <cofactor evidence="1">
        <name>Mn(2+)</name>
        <dbReference type="ChEBI" id="CHEBI:29035"/>
    </cofactor>
</comment>
<comment type="pathway">
    <text evidence="1">Isoprenoid biosynthesis; isopentenyl diphosphate biosynthesis via DXP pathway; isopentenyl diphosphate from 1-deoxy-D-xylulose 5-phosphate: step 1/6.</text>
</comment>
<comment type="similarity">
    <text evidence="1">Belongs to the DXR family.</text>
</comment>
<sequence>MKRISLIGGTGSIGVQTCDVIEQHPDLFELEAYAFGTNVEVATEWINRLRPKYVSATSIEVLEQLKPRLTYEPLYFIGPEGLKECATAERADIVVTAVVGAVGLEPTLAAIQAGKDIALANKETLVTAGHLVKAAVKEHGVNLLPVDSEHSAIYQCLNGERREDVSKIILTASGGSFRDRSRDELADVTVEDALNHPNWSMGAKITIDSATMFNKGLEVIEAHWLFDIDYNDIEVILHRESIIHSMVEFKDAAVMAQLGNPDMRGPILYALSGPKRLEIEGNKRLNLKEIGKLHFEEADFNRYPALRLAFEAGRAGGSMPTVLNAANEVAVDLFLNGQITFLEIERLVEDAMARHEVIAEPTLAQILEVDRAVRQQIQQGIEGGE</sequence>